<accession>O44572</accession>
<accession>Q5FBV3</accession>
<name>TNNI4_CAEEL</name>
<sequence>MSDVDADEARKMAERERKKEEVRKRLEEASRMKKAKKGFLTPERKKKLRKLLMMKAAEDLKQQQMLKEQERQRILQERIIPLPDLDNEDDLEAVYDEIRERLIDLESENYDVSYIVRQKDFEINELTIAVNDLRGKFVKPTLKKVSKTEGKFDKLKKKEATKVDFRAQLKVVDKNEFALDEEDTEKKEKAAWAK</sequence>
<dbReference type="EMBL" id="AB107583">
    <property type="protein sequence ID" value="BAD89381.1"/>
    <property type="molecule type" value="Genomic_DNA"/>
</dbReference>
<dbReference type="EMBL" id="FO080652">
    <property type="protein sequence ID" value="CCD65507.1"/>
    <property type="molecule type" value="Genomic_DNA"/>
</dbReference>
<dbReference type="PIR" id="T15106">
    <property type="entry name" value="T15106"/>
</dbReference>
<dbReference type="RefSeq" id="NP_500741.2">
    <property type="nucleotide sequence ID" value="NM_068340.6"/>
</dbReference>
<dbReference type="SMR" id="O44572"/>
<dbReference type="BioGRID" id="42420">
    <property type="interactions" value="8"/>
</dbReference>
<dbReference type="DIP" id="DIP-25124N"/>
<dbReference type="FunCoup" id="O44572">
    <property type="interactions" value="30"/>
</dbReference>
<dbReference type="STRING" id="6239.W03F8.1.2"/>
<dbReference type="iPTMnet" id="O44572"/>
<dbReference type="PaxDb" id="6239-W03F8.1"/>
<dbReference type="PeptideAtlas" id="O44572"/>
<dbReference type="EnsemblMetazoa" id="W03F8.1.1">
    <property type="protein sequence ID" value="W03F8.1.1"/>
    <property type="gene ID" value="WBGene00006586"/>
</dbReference>
<dbReference type="GeneID" id="177295"/>
<dbReference type="KEGG" id="cel:CELE_W03F8.1"/>
<dbReference type="UCSC" id="W03F8.1">
    <property type="organism name" value="c. elegans"/>
</dbReference>
<dbReference type="AGR" id="WB:WBGene00006586"/>
<dbReference type="CTD" id="177295"/>
<dbReference type="WormBase" id="W03F8.1">
    <property type="protein sequence ID" value="CE29829"/>
    <property type="gene ID" value="WBGene00006586"/>
    <property type="gene designation" value="tni-4"/>
</dbReference>
<dbReference type="eggNOG" id="KOG3977">
    <property type="taxonomic scope" value="Eukaryota"/>
</dbReference>
<dbReference type="GeneTree" id="ENSGT01030000234588"/>
<dbReference type="HOGENOM" id="CLU_053937_2_0_1"/>
<dbReference type="InParanoid" id="O44572"/>
<dbReference type="OMA" id="KRHRAIT"/>
<dbReference type="OrthoDB" id="371899at2759"/>
<dbReference type="PhylomeDB" id="O44572"/>
<dbReference type="Reactome" id="R-CEL-5578775">
    <property type="pathway name" value="Ion homeostasis"/>
</dbReference>
<dbReference type="PRO" id="PR:O44572"/>
<dbReference type="Proteomes" id="UP000001940">
    <property type="component" value="Chromosome IV"/>
</dbReference>
<dbReference type="Bgee" id="WBGene00006586">
    <property type="expression patterns" value="Expressed in pharyngeal muscle cell (C elegans) and 3 other cell types or tissues"/>
</dbReference>
<dbReference type="GO" id="GO:0030017">
    <property type="term" value="C:sarcomere"/>
    <property type="evidence" value="ECO:0000314"/>
    <property type="project" value="WormBase"/>
</dbReference>
<dbReference type="GO" id="GO:0005861">
    <property type="term" value="C:troponin complex"/>
    <property type="evidence" value="ECO:0000318"/>
    <property type="project" value="GO_Central"/>
</dbReference>
<dbReference type="GO" id="GO:0003779">
    <property type="term" value="F:actin binding"/>
    <property type="evidence" value="ECO:0007669"/>
    <property type="project" value="UniProtKB-KW"/>
</dbReference>
<dbReference type="GO" id="GO:0030172">
    <property type="term" value="F:troponin C binding"/>
    <property type="evidence" value="ECO:0000353"/>
    <property type="project" value="WormBase"/>
</dbReference>
<dbReference type="GO" id="GO:0009792">
    <property type="term" value="P:embryo development ending in birth or egg hatching"/>
    <property type="evidence" value="ECO:0000315"/>
    <property type="project" value="WormBase"/>
</dbReference>
<dbReference type="GO" id="GO:0006936">
    <property type="term" value="P:muscle contraction"/>
    <property type="evidence" value="ECO:0000318"/>
    <property type="project" value="GO_Central"/>
</dbReference>
<dbReference type="GO" id="GO:0043050">
    <property type="term" value="P:nematode pharyngeal pumping"/>
    <property type="evidence" value="ECO:0000315"/>
    <property type="project" value="WormBase"/>
</dbReference>
<dbReference type="FunFam" id="1.20.5.350:FF:000005">
    <property type="entry name" value="Troponin I 1"/>
    <property type="match status" value="1"/>
</dbReference>
<dbReference type="Gene3D" id="1.20.5.350">
    <property type="match status" value="1"/>
</dbReference>
<dbReference type="InterPro" id="IPR001978">
    <property type="entry name" value="Troponin"/>
</dbReference>
<dbReference type="InterPro" id="IPR050875">
    <property type="entry name" value="Troponin_I"/>
</dbReference>
<dbReference type="InterPro" id="IPR038077">
    <property type="entry name" value="Troponin_sf"/>
</dbReference>
<dbReference type="PANTHER" id="PTHR13738">
    <property type="entry name" value="TROPONIN I"/>
    <property type="match status" value="1"/>
</dbReference>
<dbReference type="PANTHER" id="PTHR13738:SF41">
    <property type="entry name" value="TROPONIN I 4"/>
    <property type="match status" value="1"/>
</dbReference>
<dbReference type="Pfam" id="PF00992">
    <property type="entry name" value="Troponin"/>
    <property type="match status" value="1"/>
</dbReference>
<dbReference type="SUPFAM" id="SSF90250">
    <property type="entry name" value="Troponin coil-coiled subunits"/>
    <property type="match status" value="1"/>
</dbReference>
<feature type="chain" id="PRO_0000186164" description="Troponin I 4">
    <location>
        <begin position="1"/>
        <end position="194"/>
    </location>
</feature>
<feature type="region of interest" description="Disordered" evidence="2">
    <location>
        <begin position="1"/>
        <end position="27"/>
    </location>
</feature>
<feature type="compositionally biased region" description="Basic and acidic residues" evidence="2">
    <location>
        <begin position="7"/>
        <end position="27"/>
    </location>
</feature>
<protein>
    <recommendedName>
        <fullName>Troponin I 4</fullName>
        <shortName>CeTNI-4</shortName>
        <shortName>TnI 4</shortName>
    </recommendedName>
</protein>
<comment type="function">
    <text evidence="1">Troponin I is the inhibitory subunit of troponin, the thin filament regulatory complex which confers calcium-sensitivity to muscle actomyosin ATPase activity.</text>
</comment>
<comment type="tissue specificity">
    <text evidence="3 4">Expression is detected only in pharyngeal muscle cells from embryos to adults.</text>
</comment>
<comment type="disruption phenotype">
    <text evidence="4">Worms exhibit developmental arrest at gastrulation.</text>
</comment>
<comment type="similarity">
    <text evidence="5">Belongs to the troponin I family.</text>
</comment>
<organism>
    <name type="scientific">Caenorhabditis elegans</name>
    <dbReference type="NCBI Taxonomy" id="6239"/>
    <lineage>
        <taxon>Eukaryota</taxon>
        <taxon>Metazoa</taxon>
        <taxon>Ecdysozoa</taxon>
        <taxon>Nematoda</taxon>
        <taxon>Chromadorea</taxon>
        <taxon>Rhabditida</taxon>
        <taxon>Rhabditina</taxon>
        <taxon>Rhabditomorpha</taxon>
        <taxon>Rhabditoidea</taxon>
        <taxon>Rhabditidae</taxon>
        <taxon>Peloderinae</taxon>
        <taxon>Caenorhabditis</taxon>
    </lineage>
</organism>
<proteinExistence type="evidence at transcript level"/>
<keyword id="KW-0009">Actin-binding</keyword>
<keyword id="KW-0514">Muscle protein</keyword>
<keyword id="KW-1185">Reference proteome</keyword>
<evidence type="ECO:0000250" key="1"/>
<evidence type="ECO:0000256" key="2">
    <source>
        <dbReference type="SAM" id="MobiDB-lite"/>
    </source>
</evidence>
<evidence type="ECO:0000269" key="3">
    <source>
    </source>
</evidence>
<evidence type="ECO:0000269" key="4">
    <source>
    </source>
</evidence>
<evidence type="ECO:0000305" key="5"/>
<reference key="1">
    <citation type="journal article" date="2005" name="Genes Cells">
        <title>Tissue expression of four troponin I genes and their molecular interactions with two troponin C isoforms in Caenorhabditis elegans.</title>
        <authorList>
            <person name="Ruksana R."/>
            <person name="Kuroda K."/>
            <person name="Terami H."/>
            <person name="Bando T."/>
            <person name="Kitaoka S."/>
            <person name="Takaya T."/>
            <person name="Sakube Y."/>
            <person name="Kagawa H."/>
        </authorList>
    </citation>
    <scope>NUCLEOTIDE SEQUENCE [GENOMIC DNA]</scope>
    <scope>TISSUE SPECIFICITY</scope>
    <scope>DISRUPTION PHENOTYPE</scope>
</reference>
<reference key="2">
    <citation type="journal article" date="1998" name="Science">
        <title>Genome sequence of the nematode C. elegans: a platform for investigating biology.</title>
        <authorList>
            <consortium name="The C. elegans sequencing consortium"/>
        </authorList>
    </citation>
    <scope>NUCLEOTIDE SEQUENCE [LARGE SCALE GENOMIC DNA]</scope>
    <source>
        <strain>Bristol N2</strain>
    </source>
</reference>
<reference key="3">
    <citation type="journal article" date="2004" name="Biophys. J.">
        <title>Disruption of Caenorhabditis elegans muscle structure and function caused by mutation of troponin I.</title>
        <authorList>
            <person name="Burkeen A.K."/>
            <person name="Maday S.L."/>
            <person name="Rybicka K.K."/>
            <person name="Sulcove J.A."/>
            <person name="Ward J."/>
            <person name="Huang M.M."/>
            <person name="Barstead R."/>
            <person name="Franzini-Armstrong C."/>
            <person name="Allen T.S."/>
        </authorList>
    </citation>
    <scope>TISSUE SPECIFICITY</scope>
</reference>
<gene>
    <name type="primary">tni-4</name>
    <name type="ORF">W03F8.1</name>
</gene>